<reference key="1">
    <citation type="journal article" date="2010" name="J. Bacteriol.">
        <title>The genetic basis of laboratory adaptation in Caulobacter crescentus.</title>
        <authorList>
            <person name="Marks M.E."/>
            <person name="Castro-Rojas C.M."/>
            <person name="Teiling C."/>
            <person name="Du L."/>
            <person name="Kapatral V."/>
            <person name="Walunas T.L."/>
            <person name="Crosson S."/>
        </authorList>
    </citation>
    <scope>NUCLEOTIDE SEQUENCE [LARGE SCALE GENOMIC DNA]</scope>
    <source>
        <strain>NA1000 / CB15N</strain>
    </source>
</reference>
<keyword id="KW-0963">Cytoplasm</keyword>
<keyword id="KW-0488">Methylation</keyword>
<keyword id="KW-0648">Protein biosynthesis</keyword>
<keyword id="KW-1185">Reference proteome</keyword>
<name>RF2_CAUVN</name>
<proteinExistence type="inferred from homology"/>
<dbReference type="EMBL" id="CP001340">
    <property type="protein sequence ID" value="ACL95415.1"/>
    <property type="molecule type" value="Genomic_DNA"/>
</dbReference>
<dbReference type="RefSeq" id="WP_010919740.1">
    <property type="nucleotide sequence ID" value="NC_011916.1"/>
</dbReference>
<dbReference type="RefSeq" id="YP_002517323.1">
    <property type="nucleotide sequence ID" value="NC_011916.1"/>
</dbReference>
<dbReference type="SMR" id="B8GWM3"/>
<dbReference type="GeneID" id="7330090"/>
<dbReference type="KEGG" id="ccs:CCNA_01950"/>
<dbReference type="PATRIC" id="fig|565050.3.peg.1910"/>
<dbReference type="HOGENOM" id="CLU_036856_6_0_5"/>
<dbReference type="OrthoDB" id="9806673at2"/>
<dbReference type="PhylomeDB" id="B8GWM3"/>
<dbReference type="Proteomes" id="UP000001364">
    <property type="component" value="Chromosome"/>
</dbReference>
<dbReference type="GO" id="GO:0005737">
    <property type="term" value="C:cytoplasm"/>
    <property type="evidence" value="ECO:0007669"/>
    <property type="project" value="UniProtKB-SubCell"/>
</dbReference>
<dbReference type="GO" id="GO:0016149">
    <property type="term" value="F:translation release factor activity, codon specific"/>
    <property type="evidence" value="ECO:0007669"/>
    <property type="project" value="UniProtKB-UniRule"/>
</dbReference>
<dbReference type="FunFam" id="3.30.160.20:FF:000010">
    <property type="entry name" value="Peptide chain release factor 2"/>
    <property type="match status" value="1"/>
</dbReference>
<dbReference type="Gene3D" id="3.30.160.20">
    <property type="match status" value="1"/>
</dbReference>
<dbReference type="Gene3D" id="3.30.70.1660">
    <property type="match status" value="1"/>
</dbReference>
<dbReference type="Gene3D" id="1.20.58.410">
    <property type="entry name" value="Release factor"/>
    <property type="match status" value="1"/>
</dbReference>
<dbReference type="HAMAP" id="MF_00094">
    <property type="entry name" value="Rel_fac_2"/>
    <property type="match status" value="1"/>
</dbReference>
<dbReference type="InterPro" id="IPR005139">
    <property type="entry name" value="PCRF"/>
</dbReference>
<dbReference type="InterPro" id="IPR000352">
    <property type="entry name" value="Pep_chain_release_fac_I"/>
</dbReference>
<dbReference type="InterPro" id="IPR045853">
    <property type="entry name" value="Pep_chain_release_fac_I_sf"/>
</dbReference>
<dbReference type="InterPro" id="IPR004374">
    <property type="entry name" value="PrfB"/>
</dbReference>
<dbReference type="NCBIfam" id="TIGR00020">
    <property type="entry name" value="prfB"/>
    <property type="match status" value="1"/>
</dbReference>
<dbReference type="PANTHER" id="PTHR43116:SF3">
    <property type="entry name" value="CLASS I PEPTIDE CHAIN RELEASE FACTOR"/>
    <property type="match status" value="1"/>
</dbReference>
<dbReference type="PANTHER" id="PTHR43116">
    <property type="entry name" value="PEPTIDE CHAIN RELEASE FACTOR 2"/>
    <property type="match status" value="1"/>
</dbReference>
<dbReference type="Pfam" id="PF03462">
    <property type="entry name" value="PCRF"/>
    <property type="match status" value="1"/>
</dbReference>
<dbReference type="Pfam" id="PF00472">
    <property type="entry name" value="RF-1"/>
    <property type="match status" value="1"/>
</dbReference>
<dbReference type="SMART" id="SM00937">
    <property type="entry name" value="PCRF"/>
    <property type="match status" value="1"/>
</dbReference>
<dbReference type="SUPFAM" id="SSF75620">
    <property type="entry name" value="Release factor"/>
    <property type="match status" value="1"/>
</dbReference>
<dbReference type="PROSITE" id="PS00745">
    <property type="entry name" value="RF_PROK_I"/>
    <property type="match status" value="1"/>
</dbReference>
<evidence type="ECO:0000255" key="1">
    <source>
        <dbReference type="HAMAP-Rule" id="MF_00094"/>
    </source>
</evidence>
<sequence>MSRPLRPTSSSPWDCSGGVFDWDVALRKLDELNARVEDPTLWDRPSEAQAVSRERANLAAKVEAVQSIERDLKDALEYAELAEMESDEDSLNDARAQLKSLKERAGRAELEALLSGEADGNDCYVEINSGAGGTESCDWAGILLRMYTRWANAHGMTTELIEETDGDQAGIKSATLLVKGANAYGWLKTEAGVHRLVRISPYDSSARRHTSFASAWVYPVVDDNIEIEINPSDVRTDTYRASGAGGQHINKTDSAVRLTHIPTGIAVACQAGRSQHQNREEAWKMLRARLYEAELQKREAAQQALEDQKTDIGWGHQIRSYVLQPYQMVKDLRTNVETSDTQGVLDGDLDAFMAASLAQRVGHTRDGGEAS</sequence>
<organism>
    <name type="scientific">Caulobacter vibrioides (strain NA1000 / CB15N)</name>
    <name type="common">Caulobacter crescentus</name>
    <dbReference type="NCBI Taxonomy" id="565050"/>
    <lineage>
        <taxon>Bacteria</taxon>
        <taxon>Pseudomonadati</taxon>
        <taxon>Pseudomonadota</taxon>
        <taxon>Alphaproteobacteria</taxon>
        <taxon>Caulobacterales</taxon>
        <taxon>Caulobacteraceae</taxon>
        <taxon>Caulobacter</taxon>
    </lineage>
</organism>
<gene>
    <name evidence="1" type="primary">prfB</name>
    <name type="ordered locus">CCNA_01950</name>
</gene>
<comment type="function">
    <text evidence="1">Peptide chain release factor 2 directs the termination of translation in response to the peptide chain termination codons UGA and UAA.</text>
</comment>
<comment type="subcellular location">
    <subcellularLocation>
        <location evidence="1">Cytoplasm</location>
    </subcellularLocation>
</comment>
<comment type="PTM">
    <text evidence="1">Methylated by PrmC. Methylation increases the termination efficiency of RF2.</text>
</comment>
<comment type="similarity">
    <text evidence="1">Belongs to the prokaryotic/mitochondrial release factor family.</text>
</comment>
<accession>B8GWM3</accession>
<protein>
    <recommendedName>
        <fullName evidence="1">Peptide chain release factor 2</fullName>
        <shortName evidence="1">RF-2</shortName>
    </recommendedName>
</protein>
<feature type="chain" id="PRO_1000193548" description="Peptide chain release factor 2">
    <location>
        <begin position="1"/>
        <end position="371"/>
    </location>
</feature>
<feature type="modified residue" description="N5-methylglutamine" evidence="1">
    <location>
        <position position="247"/>
    </location>
</feature>